<feature type="chain" id="PRO_0000436344" description="Nonribosomal peptide synthase roqA">
    <location>
        <begin position="1"/>
        <end position="2372"/>
    </location>
</feature>
<feature type="domain" description="Carrier 1" evidence="2">
    <location>
        <begin position="750"/>
        <end position="823"/>
    </location>
</feature>
<feature type="domain" description="Carrier 2" evidence="2">
    <location>
        <begin position="1819"/>
        <end position="1895"/>
    </location>
</feature>
<feature type="region of interest" description="Adenylation 1" evidence="1">
    <location>
        <begin position="217"/>
        <end position="610"/>
    </location>
</feature>
<feature type="region of interest" description="Disordered" evidence="3">
    <location>
        <begin position="723"/>
        <end position="745"/>
    </location>
</feature>
<feature type="region of interest" description="Condensation 1" evidence="1">
    <location>
        <begin position="856"/>
        <end position="1122"/>
    </location>
</feature>
<feature type="region of interest" description="Adenylation 2" evidence="1">
    <location>
        <begin position="1290"/>
        <end position="1679"/>
    </location>
</feature>
<feature type="region of interest" description="Condensation 2" evidence="1">
    <location>
        <begin position="1962"/>
        <end position="2227"/>
    </location>
</feature>
<feature type="compositionally biased region" description="Polar residues" evidence="3">
    <location>
        <begin position="725"/>
        <end position="736"/>
    </location>
</feature>
<feature type="modified residue" description="O-(pantetheine 4'-phosphoryl)serine" evidence="2">
    <location>
        <position position="784"/>
    </location>
</feature>
<feature type="modified residue" description="O-(pantetheine 4'-phosphoryl)serine" evidence="2">
    <location>
        <position position="1856"/>
    </location>
</feature>
<name>ROQA_PENRW</name>
<proteinExistence type="evidence at protein level"/>
<protein>
    <recommendedName>
        <fullName evidence="9">Nonribosomal peptide synthase roqA</fullName>
        <ecNumber evidence="4 5 6">2.3.2.-</ecNumber>
    </recommendedName>
    <alternativeName>
        <fullName evidence="10">Roquefortine/meleagrin synthesis protein A</fullName>
    </alternativeName>
</protein>
<comment type="function">
    <text evidence="4 5 6">Dipeptide synthase; part of the gene cluster that mediates the biosynthesis of the mycotoxins roquefortine C and meleagrin (PubMed:22118684, PubMed:23776469). The first stage is catalyzed by the dipeptide synthase roqA which condenses histidine and tryptophan to produce histidyltryptophanyldiketopiperazine (HTD) (PubMed:22118684, PubMed:23776469). HTD is then converted to roquefortine C through two possible pathways (PubMed:23776469). In the first pathway, prenyltransferase roqD transforms HTD to the intermediate roquefortine D, which is in turn converted to roquefortine C by the cytochrome P450 monooxygenase roqR (PubMed:23776469). In the second pathway, HTD is first converted to the intermediate dehydrohistidyltryptophanyldi-ketopiperazine (DHTD) by roqR which is then prenylated by roqD to form roquefortine C (PubMed:23776469). Roquefortine C can be further transformed to meleagrin via three more reactions including oxydation to glandicolin A by roqM, which is further reduced to glandicoline B by roqO (PubMed:23776469). Finally, glandicoline B is converted to meleagrin by the glandicoline B O-methyltransferase roqN (PubMed:22118684, PubMed:23776469). More studies identified further branching and additional metabolites produced by the roquefortine/meleagrin cluster, including roquefortine F, roquefortine L, roquefortine M, roquefortine N and neoxaline (PubMed:24225953).</text>
</comment>
<comment type="pathway">
    <text evidence="4 5 6">Alkaloid biosynthesis.</text>
</comment>
<comment type="induction">
    <text evidence="5">Expression is decreased in presence of phenylacetic acid (PAA) (PubMed:23776469).</text>
</comment>
<comment type="disruption phenotype">
    <text evidence="4 5 7">Decreases the production of roquefortine C and meleagrin, as well as of all their intermediates HTD, DHTD, roquefortine D and glandicoline B (PubMed:22118684, PubMed:23776469, PubMed:25766600).</text>
</comment>
<comment type="biotechnology">
    <text evidence="8">The indole alkaloid meleagrin was shown to be a good candidate to control c-Met-dependent breast cancer proliferation, migration and invasion (PubMed:26692349).</text>
</comment>
<gene>
    <name evidence="10" type="primary">roqA</name>
    <name evidence="9" type="synonym">rds</name>
    <name type="ORF">Pc21g15480</name>
</gene>
<dbReference type="EC" id="2.3.2.-" evidence="4 5 6"/>
<dbReference type="EMBL" id="AM920436">
    <property type="protein sequence ID" value="CAP96445.1"/>
    <property type="molecule type" value="Genomic_DNA"/>
</dbReference>
<dbReference type="RefSeq" id="XP_002568558.1">
    <property type="nucleotide sequence ID" value="XM_002568512.1"/>
</dbReference>
<dbReference type="SMR" id="B6HJU6"/>
<dbReference type="STRING" id="500485.B6HJU6"/>
<dbReference type="GeneID" id="8315549"/>
<dbReference type="KEGG" id="pcs:N7525_008087"/>
<dbReference type="VEuPathDB" id="FungiDB:PCH_Pc21g15480"/>
<dbReference type="eggNOG" id="KOG1178">
    <property type="taxonomic scope" value="Eukaryota"/>
</dbReference>
<dbReference type="HOGENOM" id="CLU_000022_60_2_1"/>
<dbReference type="OMA" id="IQRRNDH"/>
<dbReference type="OrthoDB" id="416786at2759"/>
<dbReference type="BioCyc" id="PCHR:PC21G15480-MONOMER"/>
<dbReference type="Proteomes" id="UP000000724">
    <property type="component" value="Contig Pc00c21"/>
</dbReference>
<dbReference type="GO" id="GO:0005737">
    <property type="term" value="C:cytoplasm"/>
    <property type="evidence" value="ECO:0007669"/>
    <property type="project" value="TreeGrafter"/>
</dbReference>
<dbReference type="GO" id="GO:0016874">
    <property type="term" value="F:ligase activity"/>
    <property type="evidence" value="ECO:0007669"/>
    <property type="project" value="UniProtKB-KW"/>
</dbReference>
<dbReference type="GO" id="GO:0031177">
    <property type="term" value="F:phosphopantetheine binding"/>
    <property type="evidence" value="ECO:0007669"/>
    <property type="project" value="InterPro"/>
</dbReference>
<dbReference type="GO" id="GO:0016740">
    <property type="term" value="F:transferase activity"/>
    <property type="evidence" value="ECO:0007669"/>
    <property type="project" value="UniProtKB-KW"/>
</dbReference>
<dbReference type="GO" id="GO:0043041">
    <property type="term" value="P:amino acid activation for nonribosomal peptide biosynthetic process"/>
    <property type="evidence" value="ECO:0007669"/>
    <property type="project" value="TreeGrafter"/>
</dbReference>
<dbReference type="GO" id="GO:0044550">
    <property type="term" value="P:secondary metabolite biosynthetic process"/>
    <property type="evidence" value="ECO:0007669"/>
    <property type="project" value="TreeGrafter"/>
</dbReference>
<dbReference type="CDD" id="cd05918">
    <property type="entry name" value="A_NRPS_SidN3_like"/>
    <property type="match status" value="2"/>
</dbReference>
<dbReference type="CDD" id="cd19542">
    <property type="entry name" value="CT_NRPS-like"/>
    <property type="match status" value="1"/>
</dbReference>
<dbReference type="CDD" id="cd19545">
    <property type="entry name" value="FUM14_C_NRPS-like"/>
    <property type="match status" value="1"/>
</dbReference>
<dbReference type="FunFam" id="3.40.50.980:FF:000001">
    <property type="entry name" value="Non-ribosomal peptide synthetase"/>
    <property type="match status" value="1"/>
</dbReference>
<dbReference type="FunFam" id="3.30.300.30:FF:000015">
    <property type="entry name" value="Nonribosomal peptide synthase SidD"/>
    <property type="match status" value="2"/>
</dbReference>
<dbReference type="FunFam" id="3.40.50.12780:FF:000014">
    <property type="entry name" value="Nonribosomal peptide synthetase 1"/>
    <property type="match status" value="1"/>
</dbReference>
<dbReference type="Gene3D" id="3.30.300.30">
    <property type="match status" value="2"/>
</dbReference>
<dbReference type="Gene3D" id="3.40.50.980">
    <property type="match status" value="2"/>
</dbReference>
<dbReference type="Gene3D" id="1.10.1200.10">
    <property type="entry name" value="ACP-like"/>
    <property type="match status" value="2"/>
</dbReference>
<dbReference type="Gene3D" id="3.30.559.10">
    <property type="entry name" value="Chloramphenicol acetyltransferase-like domain"/>
    <property type="match status" value="2"/>
</dbReference>
<dbReference type="Gene3D" id="2.30.38.10">
    <property type="entry name" value="Luciferase, Domain 3"/>
    <property type="match status" value="1"/>
</dbReference>
<dbReference type="Gene3D" id="3.40.50.12780">
    <property type="entry name" value="N-terminal domain of ligase-like"/>
    <property type="match status" value="1"/>
</dbReference>
<dbReference type="Gene3D" id="3.30.559.30">
    <property type="entry name" value="Nonribosomal peptide synthetase, condensation domain"/>
    <property type="match status" value="2"/>
</dbReference>
<dbReference type="InterPro" id="IPR010071">
    <property type="entry name" value="AA_adenyl_dom"/>
</dbReference>
<dbReference type="InterPro" id="IPR036736">
    <property type="entry name" value="ACP-like_sf"/>
</dbReference>
<dbReference type="InterPro" id="IPR025110">
    <property type="entry name" value="AMP-bd_C"/>
</dbReference>
<dbReference type="InterPro" id="IPR045851">
    <property type="entry name" value="AMP-bd_C_sf"/>
</dbReference>
<dbReference type="InterPro" id="IPR020845">
    <property type="entry name" value="AMP-binding_CS"/>
</dbReference>
<dbReference type="InterPro" id="IPR000873">
    <property type="entry name" value="AMP-dep_synth/lig_dom"/>
</dbReference>
<dbReference type="InterPro" id="IPR042099">
    <property type="entry name" value="ANL_N_sf"/>
</dbReference>
<dbReference type="InterPro" id="IPR023213">
    <property type="entry name" value="CAT-like_dom_sf"/>
</dbReference>
<dbReference type="InterPro" id="IPR001242">
    <property type="entry name" value="Condensatn"/>
</dbReference>
<dbReference type="InterPro" id="IPR020806">
    <property type="entry name" value="PKS_PP-bd"/>
</dbReference>
<dbReference type="InterPro" id="IPR009081">
    <property type="entry name" value="PP-bd_ACP"/>
</dbReference>
<dbReference type="InterPro" id="IPR006162">
    <property type="entry name" value="Ppantetheine_attach_site"/>
</dbReference>
<dbReference type="NCBIfam" id="TIGR01733">
    <property type="entry name" value="AA-adenyl-dom"/>
    <property type="match status" value="2"/>
</dbReference>
<dbReference type="PANTHER" id="PTHR45527">
    <property type="entry name" value="NONRIBOSOMAL PEPTIDE SYNTHETASE"/>
    <property type="match status" value="1"/>
</dbReference>
<dbReference type="PANTHER" id="PTHR45527:SF12">
    <property type="entry name" value="NONRIBOSOMAL PEPTIDE SYNTHETASE IVOA"/>
    <property type="match status" value="1"/>
</dbReference>
<dbReference type="Pfam" id="PF00501">
    <property type="entry name" value="AMP-binding"/>
    <property type="match status" value="2"/>
</dbReference>
<dbReference type="Pfam" id="PF13193">
    <property type="entry name" value="AMP-binding_C"/>
    <property type="match status" value="1"/>
</dbReference>
<dbReference type="Pfam" id="PF00668">
    <property type="entry name" value="Condensation"/>
    <property type="match status" value="2"/>
</dbReference>
<dbReference type="Pfam" id="PF00550">
    <property type="entry name" value="PP-binding"/>
    <property type="match status" value="2"/>
</dbReference>
<dbReference type="SMART" id="SM00823">
    <property type="entry name" value="PKS_PP"/>
    <property type="match status" value="2"/>
</dbReference>
<dbReference type="SUPFAM" id="SSF56801">
    <property type="entry name" value="Acetyl-CoA synthetase-like"/>
    <property type="match status" value="2"/>
</dbReference>
<dbReference type="SUPFAM" id="SSF47336">
    <property type="entry name" value="ACP-like"/>
    <property type="match status" value="2"/>
</dbReference>
<dbReference type="SUPFAM" id="SSF52777">
    <property type="entry name" value="CoA-dependent acyltransferases"/>
    <property type="match status" value="4"/>
</dbReference>
<dbReference type="PROSITE" id="PS00455">
    <property type="entry name" value="AMP_BINDING"/>
    <property type="match status" value="2"/>
</dbReference>
<dbReference type="PROSITE" id="PS50075">
    <property type="entry name" value="CARRIER"/>
    <property type="match status" value="2"/>
</dbReference>
<dbReference type="PROSITE" id="PS00697">
    <property type="entry name" value="DNA_LIGASE_A1"/>
    <property type="match status" value="1"/>
</dbReference>
<dbReference type="PROSITE" id="PS00012">
    <property type="entry name" value="PHOSPHOPANTETHEINE"/>
    <property type="match status" value="1"/>
</dbReference>
<reference key="1">
    <citation type="journal article" date="2008" name="Nat. Biotechnol.">
        <title>Genome sequencing and analysis of the filamentous fungus Penicillium chrysogenum.</title>
        <authorList>
            <person name="van den Berg M.A."/>
            <person name="Albang R."/>
            <person name="Albermann K."/>
            <person name="Badger J.H."/>
            <person name="Daran J.-M."/>
            <person name="Driessen A.J.M."/>
            <person name="Garcia-Estrada C."/>
            <person name="Fedorova N.D."/>
            <person name="Harris D.M."/>
            <person name="Heijne W.H.M."/>
            <person name="Joardar V.S."/>
            <person name="Kiel J.A.K.W."/>
            <person name="Kovalchuk A."/>
            <person name="Martin J.F."/>
            <person name="Nierman W.C."/>
            <person name="Nijland J.G."/>
            <person name="Pronk J.T."/>
            <person name="Roubos J.A."/>
            <person name="van der Klei I.J."/>
            <person name="van Peij N.N.M.E."/>
            <person name="Veenhuis M."/>
            <person name="von Doehren H."/>
            <person name="Wagner C."/>
            <person name="Wortman J.R."/>
            <person name="Bovenberg R.A.L."/>
        </authorList>
    </citation>
    <scope>NUCLEOTIDE SEQUENCE [LARGE SCALE GENOMIC DNA]</scope>
    <source>
        <strain>ATCC 28089 / DSM 1075 / NRRL 1951 / Wisconsin 54-1255</strain>
    </source>
</reference>
<reference key="2">
    <citation type="journal article" date="2011" name="Chem. Biol.">
        <title>A single cluster of coregulated genes encodes the biosynthesis of the mycotoxins roquefortine C and meleagrin in Penicillium chrysogenum.</title>
        <authorList>
            <person name="Garcia-Estrada C."/>
            <person name="Ullan R.V."/>
            <person name="Albillos S.M."/>
            <person name="Fernandez-Bodega M.A."/>
            <person name="Durek P."/>
            <person name="von Doehren H."/>
            <person name="Martin J.F."/>
        </authorList>
    </citation>
    <scope>FUNCTION</scope>
    <scope>DISRUPTION PHENOTYPE</scope>
</reference>
<reference key="3">
    <citation type="journal article" date="2013" name="J. Biol. Chem.">
        <title>Novel key metabolites reveal further branching of the roquefortine/meleagrin biosynthetic pathway.</title>
        <authorList>
            <person name="Ries M.I."/>
            <person name="Ali H."/>
            <person name="Lankhorst P.P."/>
            <person name="Hankemeier T."/>
            <person name="Bovenberg R.A."/>
            <person name="Driessen A.J."/>
            <person name="Vreeken R.J."/>
        </authorList>
    </citation>
    <scope>FUNCTION</scope>
    <scope>CATALYTIC ACTIVITY</scope>
</reference>
<reference key="4">
    <citation type="journal article" date="2013" name="PLoS ONE">
        <title>A branched biosynthetic pathway is involved in production of roquefortine and related compounds in Penicillium chrysogenum.</title>
        <authorList>
            <person name="Ali H."/>
            <person name="Ries M.I."/>
            <person name="Nijland J.G."/>
            <person name="Lankhorst P.P."/>
            <person name="Hankemeier T."/>
            <person name="Bovenberg R.A."/>
            <person name="Vreeken R.J."/>
            <person name="Driessen A.J."/>
        </authorList>
    </citation>
    <scope>FUNCTION</scope>
    <scope>CATALYTIC ACTIVITY</scope>
    <scope>INDUCTION</scope>
    <scope>DISRUPTION PHENOTYPE</scope>
</reference>
<reference key="5">
    <citation type="journal article" date="2015" name="ChemBioChem">
        <title>A mutasynthesis approach with a Penicillium chrysogenum DeltaroqA strain yields new roquefortine D analogues.</title>
        <authorList>
            <person name="Ouchaou K."/>
            <person name="Maire F."/>
            <person name="Salo O."/>
            <person name="Ali H."/>
            <person name="Hankemeier T."/>
            <person name="van der Marel G.A."/>
            <person name="Filippov D.V."/>
            <person name="Bovenberg R.A."/>
            <person name="Vreeken R.J."/>
            <person name="Driessen A.J."/>
            <person name="Overkleeft H.S."/>
        </authorList>
    </citation>
    <scope>DISRUPTION PHENOTYPE</scope>
</reference>
<reference key="6">
    <citation type="journal article" date="2016" name="Bioorg. Med. Chem.">
        <title>The indole alkaloid meleagrin, from the olive tree endophytic fungus Penicillium chrysogenum, as a novel lead for the control of c-Met-dependent breast cancer proliferation, migration and invasion.</title>
        <authorList>
            <person name="Mady M.S."/>
            <person name="Mohyeldin M.M."/>
            <person name="Ebrahim H.Y."/>
            <person name="Elsayed H.E."/>
            <person name="Houssen W.E."/>
            <person name="Haggag E.G."/>
            <person name="Soliman R.F."/>
            <person name="El Sayed K.A."/>
        </authorList>
    </citation>
    <scope>BIOTECHNOLOGY</scope>
</reference>
<accession>B6HJU6</accession>
<evidence type="ECO:0000255" key="1"/>
<evidence type="ECO:0000255" key="2">
    <source>
        <dbReference type="PROSITE-ProRule" id="PRU00258"/>
    </source>
</evidence>
<evidence type="ECO:0000256" key="3">
    <source>
        <dbReference type="SAM" id="MobiDB-lite"/>
    </source>
</evidence>
<evidence type="ECO:0000269" key="4">
    <source>
    </source>
</evidence>
<evidence type="ECO:0000269" key="5">
    <source>
    </source>
</evidence>
<evidence type="ECO:0000269" key="6">
    <source>
    </source>
</evidence>
<evidence type="ECO:0000269" key="7">
    <source>
    </source>
</evidence>
<evidence type="ECO:0000269" key="8">
    <source>
    </source>
</evidence>
<evidence type="ECO:0000303" key="9">
    <source>
    </source>
</evidence>
<evidence type="ECO:0000303" key="10">
    <source>
    </source>
</evidence>
<keyword id="KW-0436">Ligase</keyword>
<keyword id="KW-0596">Phosphopantetheine</keyword>
<keyword id="KW-0597">Phosphoprotein</keyword>
<keyword id="KW-1185">Reference proteome</keyword>
<keyword id="KW-0677">Repeat</keyword>
<keyword id="KW-0808">Transferase</keyword>
<organism>
    <name type="scientific">Penicillium rubens (strain ATCC 28089 / DSM 1075 / NRRL 1951 / Wisconsin 54-1255)</name>
    <name type="common">Penicillium chrysogenum</name>
    <dbReference type="NCBI Taxonomy" id="500485"/>
    <lineage>
        <taxon>Eukaryota</taxon>
        <taxon>Fungi</taxon>
        <taxon>Dikarya</taxon>
        <taxon>Ascomycota</taxon>
        <taxon>Pezizomycotina</taxon>
        <taxon>Eurotiomycetes</taxon>
        <taxon>Eurotiomycetidae</taxon>
        <taxon>Eurotiales</taxon>
        <taxon>Aspergillaceae</taxon>
        <taxon>Penicillium</taxon>
        <taxon>Penicillium chrysogenum species complex</taxon>
    </lineage>
</organism>
<sequence length="2372" mass="262822">MDSYLGRDTISFPLSKELEAEWTDNGEVLLRSHLLKACWALLLGRLSETHTITFAVLEQLVAPPRDACSKLVASSPHLETWQISDRPDSLLVDAAKETHREPLSGTQTSTAVVIRWHDELNGPTSLPYAFNAIVVLDCSISPAKVYMEYSRASLTVNQAWSQLTATVHILEQLVMSPGISLRELDFLGSYSTKLILQWNNPYSLARPQVCIHTLILEHCRSQPDAEALCAWDGSVTYAELDRFSLAVAHQLLSLGVGPESVVPLYFEKSRWTVVAMLGVLRAGGAFVLLDPSHPMPRLAEICSEVQATVVITSESLQELGRKLGPRAVTILDTINSHVDTGRNAFNTSVKPSNAAYVAFTSGSTGKPKGIVIEHQCFVANTLAQNAVQNINSQTRAFQFASYGFDSSILETLMTLVAGGCVCIPSEKQRLNGLADAIRGMRANWLELTPSVARFINPEEVPDVSSVLLVGEPMSQDHITQWSGSGKIQLLNAYGPAECSVVATVQPNVQLEDPQNIGCSYSSHCWITNPQDHDQLEPLGAVGELLISGPIVARGYLNQPHQKSFISNPRWATRFGIPPGERVYKTGDLVRYNLDDGALRYVGRKDREVKIHGQRVDLHEIEHHASRFQKGMLAVADVLQVNGGSAGKLLALFIVADNDETRMTKESFVVPMNDTLLDLVTSIKHWLRDCLPPYMIPTKYTFVNRFPLTRTGKLDRRALVDLGAASSHSSTREQPSNQRDKEDVELDPGLSAKENTLCSVFAEALGCLAINIGPEDGFYDMGGNSLAAIELVARARNHGLEITVADVIRLQNPRKIARCTAESKDVREISPFSLLVDTEQSLSAATAQCGIGREMIEDIYPCTPLQEGLMHLSITNPGAFMGTYRFSLAPSTDLYRVWAAWEQLWLVHPILRTRIIQLQDGQKLQVVTKQKLPFEDISGMDNCQPMNLGTPLARVTYHRGRGSSGSDSGIFLLTMHHALFDGWSYLQMLGDLQVIYAGDKLSPRPSFKHAINYISKLSIEEGRSFWSQELKDFQATMFPTSSRRPTTSPHWQVRSQQIILAESDMNWTLANKIKLAWTLVISSQTHSNDVVYGLTVSGRNAPVPEIDRIVGPTFATFPFRTQLEDDISVEDMLVQMRQHDVSIMPFEHVGLRRIAESSSDAALACGFQNLLTIRLQSLQMPPGALIELPENENHDLKFASYALSIVAQQEGTSLGVKAIFNSCILGADRTEALLEQFDTLLQRILREPGTKMKDLRTQLSPEWQQLAAINKKSPSHLRCLHDIINHFSITQPNSEAVCAWDGSLTYSELVALARRLAGLLQSFGSGSEPGAVIGICVERSKWFPVAILGVMMSGAAMVLLEPNFPTQRLRHILRDAGARTMICSTVFQEKCAGLVDDMLVLTHDIVTQADYDAWTPSAVSHHDPMYVAFTSGSTGAPKGVVIEHGMVYSMLKAHKDIIGASIASRGLLFASPAFDICLAEIVLILCSGGCVCVPSEAQRMNSLAKTMTTMQVNMAMLTPSVARTLAPAAIPCLQTLILGGEAPSASDLETWASRVKLHQSYGPAECAMYTTTTHPLTSSSDLGNVGSSQNASCWIVDPDNHDELQPVGSIGELLIGGPIVGRGYINRAQESAAAFICDPVWSENFPFLQGARLYKTGDLAILNADGSLNLVGRKDTQVKLNGQRIELHEIEHCAERYQHGTAVIAELIKPVGIQRPRLIMFVYDPATVETTVGIDSTCHDHRGLFLPPSRQNQAYLEGVRDHLNQHLPPYMIPSHFLSLSRLPLSPSGKADRKTLRQVASKMDRETLEMYLDNPVAEKRKPTTEQERFVRASFATALSLNEEAIGMDDSFFALGGDSITAMRVLTLCRRRNMAISMQEFLSKNTVTLFCKHVILIQGQAVDSKRQKLLDSQDLVRGEDHLVQFQHLDYQLDMVRSQLNLLKSDSIQEIYPCSDAHSGVLELYTSNYTSTAIFEIRATGSVTPMQVSNAWSQLVHRHVALRTVLMKEPKVHADYLHVVLDKGPAQILALPRSKNALSELKGLEPVKSWGLSPPHRLIIGHDHSGTLFMRLETGYALIDAFSMTILLEELSLLLQGQPLPERGVSYREYLSNLRSQSSAETLQYWTQVLYGVYPSHLPRVPVTQSPLPEPRSQSRCLPFAQSKRLDSFWRSNNLTITNVFQLAWALTLAHYTNSRDVCFGTITSGRDIPHLEVWNIVGSFFNVLPCRIAIEPTRTVIDTLRQNQEDIQRRNDHQYCSIPDMIRKSGIRSLDNNQQLFNTVLTVQNPFSIQSSTAKDGSNEIDVKLIDLEDATEYDLCVAILPSPSHLKVELRYWSTTVSEGYASDILDRLFSQLEQIVHHATKPDFVQVYECTKH</sequence>